<feature type="signal peptide" evidence="3">
    <location>
        <begin position="1"/>
        <end position="25"/>
    </location>
</feature>
<feature type="chain" id="PRO_0000436579" description="Short chain dehydrogenase andC">
    <location>
        <begin position="26"/>
        <end position="252"/>
    </location>
</feature>
<feature type="active site" description="Proton donor" evidence="2">
    <location>
        <position position="137"/>
    </location>
</feature>
<feature type="active site" description="Proton acceptor" evidence="4">
    <location>
        <position position="151"/>
    </location>
</feature>
<feature type="active site" description="Lowers pKa of active site Tyr" evidence="2">
    <location>
        <position position="155"/>
    </location>
</feature>
<feature type="binding site" evidence="1">
    <location>
        <position position="11"/>
    </location>
    <ligand>
        <name>NADP(+)</name>
        <dbReference type="ChEBI" id="CHEBI:58349"/>
    </ligand>
</feature>
<feature type="binding site" evidence="1">
    <location>
        <position position="57"/>
    </location>
    <ligand>
        <name>NADP(+)</name>
        <dbReference type="ChEBI" id="CHEBI:58349"/>
    </ligand>
</feature>
<feature type="binding site" evidence="1">
    <location>
        <position position="119"/>
    </location>
    <ligand>
        <name>NADP(+)</name>
        <dbReference type="ChEBI" id="CHEBI:58349"/>
    </ligand>
</feature>
<feature type="binding site" evidence="2">
    <location>
        <position position="151"/>
    </location>
    <ligand>
        <name>NADP(+)</name>
        <dbReference type="ChEBI" id="CHEBI:58349"/>
    </ligand>
</feature>
<feature type="binding site" evidence="2">
    <location>
        <position position="155"/>
    </location>
    <ligand>
        <name>NADP(+)</name>
        <dbReference type="ChEBI" id="CHEBI:58349"/>
    </ligand>
</feature>
<comment type="function">
    <text evidence="5">Short chain dehydrogenase; part of the gene cluster that mediates the biosynthesis of anditomin, a fungal meroterpenoid (PubMed:25216349). The first step of the pathway is the synthesis of 3,5-dimethylorsellinic acid (DMOA) by the polyketide synthase andM (PubMed:25216349). DMOA is then converted to the phthalide compound 5,7-dihydroxy-4,6-dimethylphthalide (DHDMP) by the cytochrome P450 monooxygenase andK, which is further prenylated by the prenyltransferase andD to yield farnesyl-DHDMP (PubMed:25216349). Further epoxidation by the FAD-dependent monooxygenase andE leads to epoxyfarnesyl-DHDMP (PubMed:25216349). The next step involves the terpene cyclase andB that converts epoxyfarnesyl-DHDMP into preandiloid A through opening of the epoxide ring followed by the cyclization of the farnesyl moiety (PubMed:25216349). Preandiloid A is in turn oxidized at the C-3 hydroxyl group to yield preandiloid B by the dehydrogenase andC (PubMed:25216349). The dioxygenase andA is solely responsible for the dehydrogenation of preandiloid B leading to the enone preandiloid C, as well as for the intriguing structural rearrangement to generate the bicyclo[2.2.2]octane core, transforming preandiloid C into andiconin (PubMed:25216349). FAD-binding monooxygenase andJ then produces andilesin D which is reduced by dehydrogenase andI to yield andilesin A (PubMed:25216349). Action of acetyltransferase andG followed by a spontaneous acetate elimination leads then to andilesin B, which is in turn substrate of the short chain dehydrogenase andH to yield andilesin C (PubMed:25216349). Finally, the dioxygenase andF catalyzes the transformation of andilesin C to anditomin (PubMed:25216349).</text>
</comment>
<comment type="pathway">
    <text evidence="5">Secondary metabolite biosynthesis; terpenoid biosynthesis.</text>
</comment>
<comment type="disruption phenotype">
    <text evidence="5">Impairs the synthesis of anditomin but accumulates preandiloid A (PubMed:25216349).</text>
</comment>
<comment type="similarity">
    <text evidence="7">Belongs to the short-chain dehydrogenases/reductases (SDR) family.</text>
</comment>
<evidence type="ECO:0000250" key="1">
    <source>
        <dbReference type="UniProtKB" id="L0E2Z4"/>
    </source>
</evidence>
<evidence type="ECO:0000250" key="2">
    <source>
        <dbReference type="UniProtKB" id="O93868"/>
    </source>
</evidence>
<evidence type="ECO:0000255" key="3"/>
<evidence type="ECO:0000255" key="4">
    <source>
        <dbReference type="PROSITE-ProRule" id="PRU10001"/>
    </source>
</evidence>
<evidence type="ECO:0000269" key="5">
    <source>
    </source>
</evidence>
<evidence type="ECO:0000303" key="6">
    <source>
    </source>
</evidence>
<evidence type="ECO:0000305" key="7"/>
<evidence type="ECO:0000305" key="8">
    <source>
    </source>
</evidence>
<reference key="1">
    <citation type="journal article" date="2014" name="J. Am. Chem. Soc.">
        <title>Complete biosynthetic pathway of anditomin: nature's sophisticated synthetic route to a complex fungal meroterpenoid.</title>
        <authorList>
            <person name="Matsuda Y."/>
            <person name="Wakimoto T."/>
            <person name="Mori T."/>
            <person name="Awakawa T."/>
            <person name="Abe I."/>
        </authorList>
    </citation>
    <scope>NUCLEOTIDE SEQUENCE [GENOMIC DNA]</scope>
    <scope>FUNCTION</scope>
    <scope>DISRUPTION PHENOTYPE</scope>
    <source>
        <strain>ATCC 12069 / CBS 136.55 / IMI 60316 / NBRC 32302</strain>
    </source>
</reference>
<protein>
    <recommendedName>
        <fullName evidence="6">Short chain dehydrogenase andC</fullName>
        <ecNumber evidence="8">1.1.1.-</ecNumber>
    </recommendedName>
    <alternativeName>
        <fullName evidence="6">Anditomin synthesis protein C</fullName>
    </alternativeName>
</protein>
<name>ANDC_EMEVA</name>
<accession>A0A097ZPC9</accession>
<gene>
    <name evidence="6" type="primary">andC</name>
</gene>
<sequence length="252" mass="26462">MGFLQDKVVIITGAAAGIGLATATAALDEGARVFGIDLAPAPTSLQENPNFEFLRADLTDHDCPKRAVQACIAAFGQRIDGLLNVAGIADNYGSADSVTDEVWDRCLAVNLAAPVKLMREVIPIMREAGKGSIVNTSSKAGLSGASSGVAYTASKHGLIGVTKNVAWRFKTEGIRCNAISVATEMGMTGDFSLWDQAAMEAMRPIHAAHMDMGIGATIKAEEVAQTLLFLVSDLSRRVNGAVIPVDDAWSTI</sequence>
<proteinExistence type="inferred from homology"/>
<organism>
    <name type="scientific">Emericella variicolor</name>
    <name type="common">Aspergillus stellatus</name>
    <dbReference type="NCBI Taxonomy" id="1549217"/>
    <lineage>
        <taxon>Eukaryota</taxon>
        <taxon>Fungi</taxon>
        <taxon>Dikarya</taxon>
        <taxon>Ascomycota</taxon>
        <taxon>Pezizomycotina</taxon>
        <taxon>Eurotiomycetes</taxon>
        <taxon>Eurotiomycetidae</taxon>
        <taxon>Eurotiales</taxon>
        <taxon>Aspergillaceae</taxon>
        <taxon>Aspergillus</taxon>
        <taxon>Aspergillus subgen. Nidulantes</taxon>
    </lineage>
</organism>
<dbReference type="EC" id="1.1.1.-" evidence="8"/>
<dbReference type="EMBL" id="AB981314">
    <property type="protein sequence ID" value="BAP81857.1"/>
    <property type="molecule type" value="Genomic_DNA"/>
</dbReference>
<dbReference type="SMR" id="A0A097ZPC9"/>
<dbReference type="BioCyc" id="MetaCyc:MONOMER-19046"/>
<dbReference type="UniPathway" id="UPA00213"/>
<dbReference type="GO" id="GO:0016491">
    <property type="term" value="F:oxidoreductase activity"/>
    <property type="evidence" value="ECO:0007669"/>
    <property type="project" value="UniProtKB-KW"/>
</dbReference>
<dbReference type="GO" id="GO:0044550">
    <property type="term" value="P:secondary metabolite biosynthetic process"/>
    <property type="evidence" value="ECO:0007669"/>
    <property type="project" value="UniProtKB-ARBA"/>
</dbReference>
<dbReference type="GO" id="GO:0016114">
    <property type="term" value="P:terpenoid biosynthetic process"/>
    <property type="evidence" value="ECO:0007669"/>
    <property type="project" value="UniProtKB-UniPathway"/>
</dbReference>
<dbReference type="CDD" id="cd05233">
    <property type="entry name" value="SDR_c"/>
    <property type="match status" value="1"/>
</dbReference>
<dbReference type="FunFam" id="3.40.50.720:FF:000084">
    <property type="entry name" value="Short-chain dehydrogenase reductase"/>
    <property type="match status" value="1"/>
</dbReference>
<dbReference type="Gene3D" id="3.40.50.720">
    <property type="entry name" value="NAD(P)-binding Rossmann-like Domain"/>
    <property type="match status" value="1"/>
</dbReference>
<dbReference type="InterPro" id="IPR036291">
    <property type="entry name" value="NAD(P)-bd_dom_sf"/>
</dbReference>
<dbReference type="InterPro" id="IPR020904">
    <property type="entry name" value="Sc_DH/Rdtase_CS"/>
</dbReference>
<dbReference type="InterPro" id="IPR002347">
    <property type="entry name" value="SDR_fam"/>
</dbReference>
<dbReference type="InterPro" id="IPR051122">
    <property type="entry name" value="SDR_superfamily_enzyme"/>
</dbReference>
<dbReference type="PANTHER" id="PTHR43477">
    <property type="entry name" value="DIHYDROANTICAPSIN 7-DEHYDROGENASE"/>
    <property type="match status" value="1"/>
</dbReference>
<dbReference type="PANTHER" id="PTHR43477:SF1">
    <property type="entry name" value="DIHYDROANTICAPSIN 7-DEHYDROGENASE"/>
    <property type="match status" value="1"/>
</dbReference>
<dbReference type="Pfam" id="PF13561">
    <property type="entry name" value="adh_short_C2"/>
    <property type="match status" value="1"/>
</dbReference>
<dbReference type="PRINTS" id="PR00081">
    <property type="entry name" value="GDHRDH"/>
</dbReference>
<dbReference type="PRINTS" id="PR00080">
    <property type="entry name" value="SDRFAMILY"/>
</dbReference>
<dbReference type="SUPFAM" id="SSF51735">
    <property type="entry name" value="NAD(P)-binding Rossmann-fold domains"/>
    <property type="match status" value="1"/>
</dbReference>
<dbReference type="PROSITE" id="PS00061">
    <property type="entry name" value="ADH_SHORT"/>
    <property type="match status" value="1"/>
</dbReference>
<keyword id="KW-0521">NADP</keyword>
<keyword id="KW-0560">Oxidoreductase</keyword>
<keyword id="KW-0732">Signal</keyword>